<name>APC11_PONAB</name>
<accession>Q5R8A2</accession>
<feature type="chain" id="PRO_0000055749" description="Anaphase-promoting complex subunit 11">
    <location>
        <begin position="1"/>
        <end position="84"/>
    </location>
</feature>
<feature type="zinc finger region" description="RING-type" evidence="3">
    <location>
        <begin position="34"/>
        <end position="77"/>
    </location>
</feature>
<feature type="binding site" evidence="1">
    <location>
        <position position="23"/>
    </location>
    <ligand>
        <name>Zn(2+)</name>
        <dbReference type="ChEBI" id="CHEBI:29105"/>
        <label>1</label>
    </ligand>
</feature>
<feature type="binding site" evidence="1">
    <location>
        <position position="26"/>
    </location>
    <ligand>
        <name>Zn(2+)</name>
        <dbReference type="ChEBI" id="CHEBI:29105"/>
        <label>1</label>
    </ligand>
</feature>
<feature type="binding site" evidence="1">
    <location>
        <position position="34"/>
    </location>
    <ligand>
        <name>Zn(2+)</name>
        <dbReference type="ChEBI" id="CHEBI:29105"/>
        <label>3</label>
    </ligand>
</feature>
<feature type="binding site" evidence="1">
    <location>
        <position position="37"/>
    </location>
    <ligand>
        <name>Zn(2+)</name>
        <dbReference type="ChEBI" id="CHEBI:29105"/>
        <label>3</label>
    </ligand>
</feature>
<feature type="binding site" evidence="1">
    <location>
        <position position="44"/>
    </location>
    <ligand>
        <name>Zn(2+)</name>
        <dbReference type="ChEBI" id="CHEBI:29105"/>
        <label>3</label>
    </ligand>
</feature>
<feature type="binding site" evidence="1">
    <location>
        <position position="51"/>
    </location>
    <ligand>
        <name>Zn(2+)</name>
        <dbReference type="ChEBI" id="CHEBI:29105"/>
        <label>2</label>
    </ligand>
</feature>
<feature type="binding site" evidence="1">
    <location>
        <position position="53"/>
    </location>
    <ligand>
        <name>Zn(2+)</name>
        <dbReference type="ChEBI" id="CHEBI:29105"/>
        <label>2</label>
    </ligand>
</feature>
<feature type="binding site" evidence="1">
    <location>
        <position position="56"/>
    </location>
    <ligand>
        <name>Zn(2+)</name>
        <dbReference type="ChEBI" id="CHEBI:29105"/>
        <label>1</label>
    </ligand>
</feature>
<feature type="binding site" evidence="1">
    <location>
        <position position="58"/>
    </location>
    <ligand>
        <name>Zn(2+)</name>
        <dbReference type="ChEBI" id="CHEBI:29105"/>
        <label>3</label>
    </ligand>
</feature>
<feature type="binding site" evidence="1">
    <location>
        <position position="59"/>
    </location>
    <ligand>
        <name>Zn(2+)</name>
        <dbReference type="ChEBI" id="CHEBI:29105"/>
        <label>1</label>
    </ligand>
</feature>
<feature type="binding site" evidence="1">
    <location>
        <position position="73"/>
    </location>
    <ligand>
        <name>Zn(2+)</name>
        <dbReference type="ChEBI" id="CHEBI:29105"/>
        <label>2</label>
    </ligand>
</feature>
<feature type="binding site" evidence="1">
    <location>
        <position position="76"/>
    </location>
    <ligand>
        <name>Zn(2+)</name>
        <dbReference type="ChEBI" id="CHEBI:29105"/>
        <label>2</label>
    </ligand>
</feature>
<comment type="function">
    <text evidence="2">Together with the cullin protein ANAPC2, constitutes the catalytic component of the anaphase promoting complex/cyclosome (APC/C), a cell cycle-regulated E3 ubiquitin ligase that controls progression through mitosis and the G1 phase of the cell cycle. The APC/C complex acts by mediating ubiquitination and subsequent degradation of target proteins: it mainly mediates the formation of 'Lys-11'-linked polyubiquitin chains and, to a lower extent, the formation of 'Lys-48'- and 'Lys-63'-linked polyubiquitin chains. The APC/C complex catalyzes assembly of branched 'Lys-11'-/'Lys-48'-linked branched ubiquitin chains on target proteins. May recruit the E2 ubiquitin-conjugating enzymes to the complex.</text>
</comment>
<comment type="pathway">
    <text evidence="2">Protein modification; protein ubiquitination.</text>
</comment>
<comment type="subunit">
    <text evidence="2">The mammalian APC/C is composed at least of 14 distinct subunits ANAPC1, ANAPC2, CDC27/APC3, ANAPC4, ANAPC5, CDC16/APC6, ANAPC7, CDC23/APC8, ANAPC10, ANAPC11, CDC26/APC12, ANAPC13, ANAPC15 and ANAPC16 that assemble into a complex of at least 19 chains with a combined molecular mass of around 1.2 MDa; APC/C interacts with FZR1 and FBXO5. Interacts with the cullin domain of ANAPC2. Interacts with UBE2D2.</text>
</comment>
<comment type="subcellular location">
    <subcellularLocation>
        <location evidence="1">Cytoplasm</location>
    </subcellularLocation>
    <subcellularLocation>
        <location evidence="1">Nucleus</location>
    </subcellularLocation>
</comment>
<comment type="domain">
    <text evidence="1">The RING-type zinc finger domain coordinates an additional third zinc ion.</text>
</comment>
<comment type="PTM">
    <text evidence="1">Auto-ubiquitinated.</text>
</comment>
<comment type="similarity">
    <text evidence="4">Belongs to the RING-box family.</text>
</comment>
<evidence type="ECO:0000250" key="1"/>
<evidence type="ECO:0000250" key="2">
    <source>
        <dbReference type="UniProtKB" id="Q9NYG5"/>
    </source>
</evidence>
<evidence type="ECO:0000255" key="3">
    <source>
        <dbReference type="PROSITE-ProRule" id="PRU00175"/>
    </source>
</evidence>
<evidence type="ECO:0000305" key="4"/>
<proteinExistence type="inferred from homology"/>
<gene>
    <name type="primary">ANAPC11</name>
</gene>
<protein>
    <recommendedName>
        <fullName>Anaphase-promoting complex subunit 11</fullName>
        <shortName>APC11</shortName>
    </recommendedName>
    <alternativeName>
        <fullName>Cyclosome subunit 11</fullName>
    </alternativeName>
</protein>
<dbReference type="EMBL" id="CR859851">
    <property type="protein sequence ID" value="CAH92008.1"/>
    <property type="molecule type" value="mRNA"/>
</dbReference>
<dbReference type="RefSeq" id="NP_001126166.1">
    <property type="nucleotide sequence ID" value="NM_001132694.1"/>
</dbReference>
<dbReference type="RefSeq" id="XP_009250433.1">
    <property type="nucleotide sequence ID" value="XM_009252158.1"/>
</dbReference>
<dbReference type="RefSeq" id="XP_009250434.1">
    <property type="nucleotide sequence ID" value="XM_009252159.1"/>
</dbReference>
<dbReference type="RefSeq" id="XP_009250435.1">
    <property type="nucleotide sequence ID" value="XM_009252160.1"/>
</dbReference>
<dbReference type="RefSeq" id="XP_009250436.1">
    <property type="nucleotide sequence ID" value="XM_009252161.1"/>
</dbReference>
<dbReference type="RefSeq" id="XP_009250437.1">
    <property type="nucleotide sequence ID" value="XM_009252162.1"/>
</dbReference>
<dbReference type="RefSeq" id="XP_009250439.1">
    <property type="nucleotide sequence ID" value="XM_009252164.1"/>
</dbReference>
<dbReference type="RefSeq" id="XP_009250440.1">
    <property type="nucleotide sequence ID" value="XM_009252165.1"/>
</dbReference>
<dbReference type="BMRB" id="Q5R8A2"/>
<dbReference type="SMR" id="Q5R8A2"/>
<dbReference type="FunCoup" id="Q5R8A2">
    <property type="interactions" value="2038"/>
</dbReference>
<dbReference type="GeneID" id="100173127"/>
<dbReference type="KEGG" id="pon:100173127"/>
<dbReference type="CTD" id="51529"/>
<dbReference type="InParanoid" id="Q5R8A2"/>
<dbReference type="OrthoDB" id="1681166at2759"/>
<dbReference type="UniPathway" id="UPA00143"/>
<dbReference type="Proteomes" id="UP000001595">
    <property type="component" value="Unplaced"/>
</dbReference>
<dbReference type="GO" id="GO:0005680">
    <property type="term" value="C:anaphase-promoting complex"/>
    <property type="evidence" value="ECO:0000250"/>
    <property type="project" value="UniProtKB"/>
</dbReference>
<dbReference type="GO" id="GO:0005737">
    <property type="term" value="C:cytoplasm"/>
    <property type="evidence" value="ECO:0007669"/>
    <property type="project" value="UniProtKB-SubCell"/>
</dbReference>
<dbReference type="GO" id="GO:0097602">
    <property type="term" value="F:cullin family protein binding"/>
    <property type="evidence" value="ECO:0007669"/>
    <property type="project" value="InterPro"/>
</dbReference>
<dbReference type="GO" id="GO:0061630">
    <property type="term" value="F:ubiquitin protein ligase activity"/>
    <property type="evidence" value="ECO:0007669"/>
    <property type="project" value="InterPro"/>
</dbReference>
<dbReference type="GO" id="GO:0008270">
    <property type="term" value="F:zinc ion binding"/>
    <property type="evidence" value="ECO:0007669"/>
    <property type="project" value="UniProtKB-KW"/>
</dbReference>
<dbReference type="GO" id="GO:0031145">
    <property type="term" value="P:anaphase-promoting complex-dependent catabolic process"/>
    <property type="evidence" value="ECO:0000250"/>
    <property type="project" value="UniProtKB"/>
</dbReference>
<dbReference type="GO" id="GO:0051301">
    <property type="term" value="P:cell division"/>
    <property type="evidence" value="ECO:0007669"/>
    <property type="project" value="UniProtKB-KW"/>
</dbReference>
<dbReference type="GO" id="GO:0141198">
    <property type="term" value="P:protein branched polyubiquitination"/>
    <property type="evidence" value="ECO:0000250"/>
    <property type="project" value="UniProtKB"/>
</dbReference>
<dbReference type="GO" id="GO:0070979">
    <property type="term" value="P:protein K11-linked ubiquitination"/>
    <property type="evidence" value="ECO:0000250"/>
    <property type="project" value="UniProtKB"/>
</dbReference>
<dbReference type="GO" id="GO:0070936">
    <property type="term" value="P:protein K48-linked ubiquitination"/>
    <property type="evidence" value="ECO:0000250"/>
    <property type="project" value="UniProtKB"/>
</dbReference>
<dbReference type="CDD" id="cd16456">
    <property type="entry name" value="RING-H2_APC11"/>
    <property type="match status" value="1"/>
</dbReference>
<dbReference type="FunFam" id="3.30.40.10:FF:000111">
    <property type="entry name" value="Anaphase-promoting complex subunit 11"/>
    <property type="match status" value="1"/>
</dbReference>
<dbReference type="Gene3D" id="3.30.40.10">
    <property type="entry name" value="Zinc/RING finger domain, C3HC4 (zinc finger)"/>
    <property type="match status" value="1"/>
</dbReference>
<dbReference type="InterPro" id="IPR051031">
    <property type="entry name" value="RING-box_E3_Ubiquitin_Ligase"/>
</dbReference>
<dbReference type="InterPro" id="IPR024991">
    <property type="entry name" value="RING-H2_APC11"/>
</dbReference>
<dbReference type="InterPro" id="IPR001841">
    <property type="entry name" value="Znf_RING"/>
</dbReference>
<dbReference type="InterPro" id="IPR013083">
    <property type="entry name" value="Znf_RING/FYVE/PHD"/>
</dbReference>
<dbReference type="PANTHER" id="PTHR11210">
    <property type="entry name" value="RING BOX"/>
    <property type="match status" value="1"/>
</dbReference>
<dbReference type="Pfam" id="PF12861">
    <property type="entry name" value="zf-ANAPC11"/>
    <property type="match status" value="1"/>
</dbReference>
<dbReference type="SUPFAM" id="SSF57850">
    <property type="entry name" value="RING/U-box"/>
    <property type="match status" value="1"/>
</dbReference>
<dbReference type="PROSITE" id="PS50089">
    <property type="entry name" value="ZF_RING_2"/>
    <property type="match status" value="1"/>
</dbReference>
<reference key="1">
    <citation type="submission" date="2004-11" db="EMBL/GenBank/DDBJ databases">
        <authorList>
            <consortium name="The German cDNA consortium"/>
        </authorList>
    </citation>
    <scope>NUCLEOTIDE SEQUENCE [LARGE SCALE MRNA]</scope>
    <source>
        <tissue>Brain cortex</tissue>
    </source>
</reference>
<sequence length="84" mass="9841">MKVKIKCWNGVATWLWVANDENCGICRMAFNGCCPDCKVPGDDCPLVWGQCSHCFHMHCILKWLHAQQVQQHCPMCRQEWKFKE</sequence>
<organism>
    <name type="scientific">Pongo abelii</name>
    <name type="common">Sumatran orangutan</name>
    <name type="synonym">Pongo pygmaeus abelii</name>
    <dbReference type="NCBI Taxonomy" id="9601"/>
    <lineage>
        <taxon>Eukaryota</taxon>
        <taxon>Metazoa</taxon>
        <taxon>Chordata</taxon>
        <taxon>Craniata</taxon>
        <taxon>Vertebrata</taxon>
        <taxon>Euteleostomi</taxon>
        <taxon>Mammalia</taxon>
        <taxon>Eutheria</taxon>
        <taxon>Euarchontoglires</taxon>
        <taxon>Primates</taxon>
        <taxon>Haplorrhini</taxon>
        <taxon>Catarrhini</taxon>
        <taxon>Hominidae</taxon>
        <taxon>Pongo</taxon>
    </lineage>
</organism>
<keyword id="KW-0131">Cell cycle</keyword>
<keyword id="KW-0132">Cell division</keyword>
<keyword id="KW-0963">Cytoplasm</keyword>
<keyword id="KW-0479">Metal-binding</keyword>
<keyword id="KW-0498">Mitosis</keyword>
<keyword id="KW-0539">Nucleus</keyword>
<keyword id="KW-1185">Reference proteome</keyword>
<keyword id="KW-0832">Ubl conjugation</keyword>
<keyword id="KW-0833">Ubl conjugation pathway</keyword>
<keyword id="KW-0862">Zinc</keyword>
<keyword id="KW-0863">Zinc-finger</keyword>